<keyword id="KW-0210">Decarboxylase</keyword>
<keyword id="KW-0456">Lyase</keyword>
<keyword id="KW-0670">Pyruvate</keyword>
<evidence type="ECO:0000250" key="1"/>
<evidence type="ECO:0000305" key="2"/>
<sequence length="183" mass="20211">MIPRKAFLTKGTGVHKDRLASFELALRDAKIEKYNLVSVSSILPPNCKLVPREEGLAELKPGAIVHCVLARNDTNEPHRLMASAIGTAVPVNEENYGYISEHHSFGEEEIIAGEYAEDLAATMLATTLGIEFDAEMAWHEREQVYKASGHIFDTFHMCQTAKGDKDGKWTTTVAAMVFVTSKC</sequence>
<comment type="catalytic activity">
    <reaction>
        <text>L-arginine + H(+) = agmatine + CO2</text>
        <dbReference type="Rhea" id="RHEA:17641"/>
        <dbReference type="ChEBI" id="CHEBI:15378"/>
        <dbReference type="ChEBI" id="CHEBI:16526"/>
        <dbReference type="ChEBI" id="CHEBI:32682"/>
        <dbReference type="ChEBI" id="CHEBI:58145"/>
        <dbReference type="EC" id="4.1.1.19"/>
    </reaction>
</comment>
<comment type="cofactor">
    <cofactor evidence="1">
        <name>pyruvate</name>
        <dbReference type="ChEBI" id="CHEBI:15361"/>
    </cofactor>
    <text evidence="1">Binds 1 pyruvoyl group covalently per subunit.</text>
</comment>
<comment type="similarity">
    <text evidence="2">Belongs to the PdaD family.</text>
</comment>
<name>PDAD2_METMA</name>
<proteinExistence type="inferred from homology"/>
<organism>
    <name type="scientific">Methanosarcina mazei (strain ATCC BAA-159 / DSM 3647 / Goe1 / Go1 / JCM 11833 / OCM 88)</name>
    <name type="common">Methanosarcina frisia</name>
    <dbReference type="NCBI Taxonomy" id="192952"/>
    <lineage>
        <taxon>Archaea</taxon>
        <taxon>Methanobacteriati</taxon>
        <taxon>Methanobacteriota</taxon>
        <taxon>Stenosarchaea group</taxon>
        <taxon>Methanomicrobia</taxon>
        <taxon>Methanosarcinales</taxon>
        <taxon>Methanosarcinaceae</taxon>
        <taxon>Methanosarcina</taxon>
    </lineage>
</organism>
<dbReference type="EC" id="4.1.1.19"/>
<dbReference type="EMBL" id="AE008384">
    <property type="protein sequence ID" value="AAM32291.1"/>
    <property type="molecule type" value="Genomic_DNA"/>
</dbReference>
<dbReference type="RefSeq" id="WP_011034508.1">
    <property type="nucleotide sequence ID" value="NC_003901.1"/>
</dbReference>
<dbReference type="SMR" id="P58890"/>
<dbReference type="KEGG" id="mma:MM_2595"/>
<dbReference type="PATRIC" id="fig|192952.21.peg.2981"/>
<dbReference type="eggNOG" id="arCOG04490">
    <property type="taxonomic scope" value="Archaea"/>
</dbReference>
<dbReference type="HOGENOM" id="CLU_114389_0_0_2"/>
<dbReference type="Proteomes" id="UP000000595">
    <property type="component" value="Chromosome"/>
</dbReference>
<dbReference type="GO" id="GO:0008792">
    <property type="term" value="F:arginine decarboxylase activity"/>
    <property type="evidence" value="ECO:0007669"/>
    <property type="project" value="UniProtKB-UniRule"/>
</dbReference>
<dbReference type="GO" id="GO:0006527">
    <property type="term" value="P:arginine catabolic process"/>
    <property type="evidence" value="ECO:0007669"/>
    <property type="project" value="InterPro"/>
</dbReference>
<dbReference type="Gene3D" id="3.50.20.10">
    <property type="entry name" value="Pyruvoyl-Dependent Histidine Decarboxylase, subunit B"/>
    <property type="match status" value="1"/>
</dbReference>
<dbReference type="HAMAP" id="MF_01404">
    <property type="entry name" value="PvlArgDC"/>
    <property type="match status" value="1"/>
</dbReference>
<dbReference type="InterPro" id="IPR016104">
    <property type="entry name" value="Pyr-dep_his/arg-deCO2ase"/>
</dbReference>
<dbReference type="InterPro" id="IPR016105">
    <property type="entry name" value="Pyr-dep_his/arg-deCO2ase_sand"/>
</dbReference>
<dbReference type="InterPro" id="IPR002724">
    <property type="entry name" value="Pyruvoyl-dep_arg_deCO2ase"/>
</dbReference>
<dbReference type="NCBIfam" id="TIGR00286">
    <property type="entry name" value="pyruvoyl-dependent arginine decarboxylase"/>
    <property type="match status" value="1"/>
</dbReference>
<dbReference type="PANTHER" id="PTHR40438">
    <property type="entry name" value="PYRUVOYL-DEPENDENT ARGININE DECARBOXYLASE"/>
    <property type="match status" value="1"/>
</dbReference>
<dbReference type="PANTHER" id="PTHR40438:SF1">
    <property type="entry name" value="PYRUVOYL-DEPENDENT ARGININE DECARBOXYLASE"/>
    <property type="match status" value="1"/>
</dbReference>
<dbReference type="Pfam" id="PF01862">
    <property type="entry name" value="PvlArgDC"/>
    <property type="match status" value="1"/>
</dbReference>
<dbReference type="PIRSF" id="PIRSF005216">
    <property type="entry name" value="Pyruvoyl-dep_arg_deCO2ase"/>
    <property type="match status" value="1"/>
</dbReference>
<dbReference type="SFLD" id="SFLDG01170">
    <property type="entry name" value="Pyruvoyl-dependent_arginine_de"/>
    <property type="match status" value="1"/>
</dbReference>
<dbReference type="SFLD" id="SFLDS00055">
    <property type="entry name" value="Pyruvoyl-Dependent_Histidine/A"/>
    <property type="match status" value="1"/>
</dbReference>
<dbReference type="SUPFAM" id="SSF56271">
    <property type="entry name" value="Pyruvoyl-dependent histidine and arginine decarboxylases"/>
    <property type="match status" value="1"/>
</dbReference>
<accession>P58890</accession>
<reference key="1">
    <citation type="journal article" date="2002" name="J. Mol. Microbiol. Biotechnol.">
        <title>The genome of Methanosarcina mazei: evidence for lateral gene transfer between Bacteria and Archaea.</title>
        <authorList>
            <person name="Deppenmeier U."/>
            <person name="Johann A."/>
            <person name="Hartsch T."/>
            <person name="Merkl R."/>
            <person name="Schmitz R.A."/>
            <person name="Martinez-Arias R."/>
            <person name="Henne A."/>
            <person name="Wiezer A."/>
            <person name="Baeumer S."/>
            <person name="Jacobi C."/>
            <person name="Brueggemann H."/>
            <person name="Lienard T."/>
            <person name="Christmann A."/>
            <person name="Boemecke M."/>
            <person name="Steckel S."/>
            <person name="Bhattacharyya A."/>
            <person name="Lykidis A."/>
            <person name="Overbeek R."/>
            <person name="Klenk H.-P."/>
            <person name="Gunsalus R.P."/>
            <person name="Fritz H.-J."/>
            <person name="Gottschalk G."/>
        </authorList>
    </citation>
    <scope>NUCLEOTIDE SEQUENCE [LARGE SCALE GENOMIC DNA]</scope>
    <source>
        <strain>ATCC BAA-159 / DSM 3647 / Goe1 / Go1 / JCM 11833 / OCM 88</strain>
    </source>
</reference>
<protein>
    <recommendedName>
        <fullName>Pyruvoyl-dependent arginine decarboxylase 2</fullName>
        <shortName>PvlArgDC 2</shortName>
        <ecNumber>4.1.1.19</ecNumber>
    </recommendedName>
    <component>
        <recommendedName>
            <fullName>Pyruvoyl-dependent arginine decarboxylase 2 subunit beta</fullName>
        </recommendedName>
    </component>
    <component>
        <recommendedName>
            <fullName>Pyruvoyl-dependent arginine decarboxylase 2 subunit alpha</fullName>
        </recommendedName>
    </component>
</protein>
<gene>
    <name type="primary">pdaD2</name>
    <name type="ordered locus">MM_2595</name>
</gene>
<feature type="chain" id="PRO_0000023320" description="Pyruvoyl-dependent arginine decarboxylase 2 subunit beta" evidence="1">
    <location>
        <begin position="1"/>
        <end position="40"/>
    </location>
</feature>
<feature type="chain" id="PRO_0000023321" description="Pyruvoyl-dependent arginine decarboxylase 2 subunit alpha" evidence="1">
    <location>
        <begin position="41"/>
        <end position="183"/>
    </location>
</feature>
<feature type="site" description="Cleavage (non-hydrolytic)" evidence="1">
    <location>
        <begin position="40"/>
        <end position="41"/>
    </location>
</feature>
<feature type="modified residue" description="Pyruvic acid (Ser)" evidence="1">
    <location>
        <position position="41"/>
    </location>
</feature>